<organism>
    <name type="scientific">Pseudomonas syringae pv. syringae (strain B728a)</name>
    <dbReference type="NCBI Taxonomy" id="205918"/>
    <lineage>
        <taxon>Bacteria</taxon>
        <taxon>Pseudomonadati</taxon>
        <taxon>Pseudomonadota</taxon>
        <taxon>Gammaproteobacteria</taxon>
        <taxon>Pseudomonadales</taxon>
        <taxon>Pseudomonadaceae</taxon>
        <taxon>Pseudomonas</taxon>
        <taxon>Pseudomonas syringae</taxon>
    </lineage>
</organism>
<sequence>MTSDDRIKLEPSWKNALRDEFEQPYMAQLREFLRQEHAAGKEIYPPGPLIFNALNSTPLDNVKVVILGQDPYHGPNQAHGLCFSVQPGVPTPPSLVNIYKELKRDLNIDIPNHGCLQSWADQGVLLLNTTLTVERANAASHAGKGWQHFTDRIIQVVSEHQPHLVFLLWGAHAQSKQKLVDATKHLVLTSVHPSPLSAYKGFLGNGHFGRANKYLEQNGIAPIDWRLPAL</sequence>
<name>UNG_PSEU2</name>
<feature type="chain" id="PRO_1000009932" description="Uracil-DNA glycosylase">
    <location>
        <begin position="1"/>
        <end position="230"/>
    </location>
</feature>
<feature type="active site" description="Proton acceptor" evidence="1">
    <location>
        <position position="70"/>
    </location>
</feature>
<accession>Q4ZPC2</accession>
<evidence type="ECO:0000255" key="1">
    <source>
        <dbReference type="HAMAP-Rule" id="MF_00148"/>
    </source>
</evidence>
<reference key="1">
    <citation type="journal article" date="2005" name="Proc. Natl. Acad. Sci. U.S.A.">
        <title>Comparison of the complete genome sequences of Pseudomonas syringae pv. syringae B728a and pv. tomato DC3000.</title>
        <authorList>
            <person name="Feil H."/>
            <person name="Feil W.S."/>
            <person name="Chain P."/>
            <person name="Larimer F."/>
            <person name="Dibartolo G."/>
            <person name="Copeland A."/>
            <person name="Lykidis A."/>
            <person name="Trong S."/>
            <person name="Nolan M."/>
            <person name="Goltsman E."/>
            <person name="Thiel J."/>
            <person name="Malfatti S."/>
            <person name="Loper J.E."/>
            <person name="Lapidus A."/>
            <person name="Detter J.C."/>
            <person name="Land M."/>
            <person name="Richardson P.M."/>
            <person name="Kyrpides N.C."/>
            <person name="Ivanova N."/>
            <person name="Lindow S.E."/>
        </authorList>
    </citation>
    <scope>NUCLEOTIDE SEQUENCE [LARGE SCALE GENOMIC DNA]</scope>
    <source>
        <strain>B728a</strain>
    </source>
</reference>
<protein>
    <recommendedName>
        <fullName evidence="1">Uracil-DNA glycosylase</fullName>
        <shortName evidence="1">UDG</shortName>
        <ecNumber evidence="1">3.2.2.27</ecNumber>
    </recommendedName>
</protein>
<keyword id="KW-0963">Cytoplasm</keyword>
<keyword id="KW-0227">DNA damage</keyword>
<keyword id="KW-0234">DNA repair</keyword>
<keyword id="KW-0378">Hydrolase</keyword>
<gene>
    <name evidence="1" type="primary">ung</name>
    <name type="ordered locus">Psyr_3970</name>
</gene>
<comment type="function">
    <text evidence="1">Excises uracil residues from the DNA which can arise as a result of misincorporation of dUMP residues by DNA polymerase or due to deamination of cytosine.</text>
</comment>
<comment type="catalytic activity">
    <reaction evidence="1">
        <text>Hydrolyzes single-stranded DNA or mismatched double-stranded DNA and polynucleotides, releasing free uracil.</text>
        <dbReference type="EC" id="3.2.2.27"/>
    </reaction>
</comment>
<comment type="subcellular location">
    <subcellularLocation>
        <location evidence="1">Cytoplasm</location>
    </subcellularLocation>
</comment>
<comment type="similarity">
    <text evidence="1">Belongs to the uracil-DNA glycosylase (UDG) superfamily. UNG family.</text>
</comment>
<dbReference type="EC" id="3.2.2.27" evidence="1"/>
<dbReference type="EMBL" id="CP000075">
    <property type="protein sequence ID" value="AAY39000.1"/>
    <property type="molecule type" value="Genomic_DNA"/>
</dbReference>
<dbReference type="RefSeq" id="WP_003405314.1">
    <property type="nucleotide sequence ID" value="NC_007005.1"/>
</dbReference>
<dbReference type="RefSeq" id="YP_237038.1">
    <property type="nucleotide sequence ID" value="NC_007005.1"/>
</dbReference>
<dbReference type="SMR" id="Q4ZPC2"/>
<dbReference type="STRING" id="205918.Psyr_3970"/>
<dbReference type="GeneID" id="65076640"/>
<dbReference type="KEGG" id="psb:Psyr_3970"/>
<dbReference type="PATRIC" id="fig|205918.7.peg.4088"/>
<dbReference type="eggNOG" id="COG0692">
    <property type="taxonomic scope" value="Bacteria"/>
</dbReference>
<dbReference type="HOGENOM" id="CLU_032162_3_1_6"/>
<dbReference type="OrthoDB" id="9804372at2"/>
<dbReference type="Proteomes" id="UP000000426">
    <property type="component" value="Chromosome"/>
</dbReference>
<dbReference type="GO" id="GO:0005737">
    <property type="term" value="C:cytoplasm"/>
    <property type="evidence" value="ECO:0007669"/>
    <property type="project" value="UniProtKB-SubCell"/>
</dbReference>
<dbReference type="GO" id="GO:0004844">
    <property type="term" value="F:uracil DNA N-glycosylase activity"/>
    <property type="evidence" value="ECO:0007669"/>
    <property type="project" value="UniProtKB-UniRule"/>
</dbReference>
<dbReference type="GO" id="GO:0097510">
    <property type="term" value="P:base-excision repair, AP site formation via deaminated base removal"/>
    <property type="evidence" value="ECO:0007669"/>
    <property type="project" value="TreeGrafter"/>
</dbReference>
<dbReference type="CDD" id="cd10027">
    <property type="entry name" value="UDG-F1-like"/>
    <property type="match status" value="1"/>
</dbReference>
<dbReference type="FunFam" id="3.40.470.10:FF:000001">
    <property type="entry name" value="Uracil-DNA glycosylase"/>
    <property type="match status" value="1"/>
</dbReference>
<dbReference type="Gene3D" id="3.40.470.10">
    <property type="entry name" value="Uracil-DNA glycosylase-like domain"/>
    <property type="match status" value="1"/>
</dbReference>
<dbReference type="HAMAP" id="MF_00148">
    <property type="entry name" value="UDG"/>
    <property type="match status" value="1"/>
</dbReference>
<dbReference type="InterPro" id="IPR002043">
    <property type="entry name" value="UDG_fam1"/>
</dbReference>
<dbReference type="InterPro" id="IPR018085">
    <property type="entry name" value="Ura-DNA_Glyclase_AS"/>
</dbReference>
<dbReference type="InterPro" id="IPR005122">
    <property type="entry name" value="Uracil-DNA_glycosylase-like"/>
</dbReference>
<dbReference type="InterPro" id="IPR036895">
    <property type="entry name" value="Uracil-DNA_glycosylase-like_sf"/>
</dbReference>
<dbReference type="NCBIfam" id="NF003588">
    <property type="entry name" value="PRK05254.1-1"/>
    <property type="match status" value="1"/>
</dbReference>
<dbReference type="NCBIfam" id="NF003589">
    <property type="entry name" value="PRK05254.1-2"/>
    <property type="match status" value="1"/>
</dbReference>
<dbReference type="NCBIfam" id="NF003591">
    <property type="entry name" value="PRK05254.1-4"/>
    <property type="match status" value="1"/>
</dbReference>
<dbReference type="NCBIfam" id="NF003592">
    <property type="entry name" value="PRK05254.1-5"/>
    <property type="match status" value="1"/>
</dbReference>
<dbReference type="NCBIfam" id="TIGR00628">
    <property type="entry name" value="ung"/>
    <property type="match status" value="1"/>
</dbReference>
<dbReference type="PANTHER" id="PTHR11264">
    <property type="entry name" value="URACIL-DNA GLYCOSYLASE"/>
    <property type="match status" value="1"/>
</dbReference>
<dbReference type="PANTHER" id="PTHR11264:SF0">
    <property type="entry name" value="URACIL-DNA GLYCOSYLASE"/>
    <property type="match status" value="1"/>
</dbReference>
<dbReference type="Pfam" id="PF03167">
    <property type="entry name" value="UDG"/>
    <property type="match status" value="1"/>
</dbReference>
<dbReference type="SMART" id="SM00986">
    <property type="entry name" value="UDG"/>
    <property type="match status" value="1"/>
</dbReference>
<dbReference type="SMART" id="SM00987">
    <property type="entry name" value="UreE_C"/>
    <property type="match status" value="1"/>
</dbReference>
<dbReference type="SUPFAM" id="SSF52141">
    <property type="entry name" value="Uracil-DNA glycosylase-like"/>
    <property type="match status" value="1"/>
</dbReference>
<dbReference type="PROSITE" id="PS00130">
    <property type="entry name" value="U_DNA_GLYCOSYLASE"/>
    <property type="match status" value="1"/>
</dbReference>
<proteinExistence type="inferred from homology"/>